<proteinExistence type="inferred from homology"/>
<keyword id="KW-0067">ATP-binding</keyword>
<keyword id="KW-0436">Ligase</keyword>
<keyword id="KW-0547">Nucleotide-binding</keyword>
<keyword id="KW-0648">Protein biosynthesis</keyword>
<keyword id="KW-1185">Reference proteome</keyword>
<dbReference type="EC" id="6.3.5.-" evidence="1"/>
<dbReference type="EMBL" id="CP000410">
    <property type="protein sequence ID" value="ABJ54141.1"/>
    <property type="molecule type" value="Genomic_DNA"/>
</dbReference>
<dbReference type="RefSeq" id="WP_000705421.1">
    <property type="nucleotide sequence ID" value="NZ_JAMLJR010000009.1"/>
</dbReference>
<dbReference type="SMR" id="Q04M40"/>
<dbReference type="PaxDb" id="373153-SPD_0398"/>
<dbReference type="KEGG" id="spd:SPD_0398"/>
<dbReference type="eggNOG" id="COG0721">
    <property type="taxonomic scope" value="Bacteria"/>
</dbReference>
<dbReference type="HOGENOM" id="CLU_105899_1_2_9"/>
<dbReference type="BioCyc" id="SPNE373153:G1G6V-437-MONOMER"/>
<dbReference type="Proteomes" id="UP000001452">
    <property type="component" value="Chromosome"/>
</dbReference>
<dbReference type="GO" id="GO:0050566">
    <property type="term" value="F:asparaginyl-tRNA synthase (glutamine-hydrolyzing) activity"/>
    <property type="evidence" value="ECO:0007669"/>
    <property type="project" value="RHEA"/>
</dbReference>
<dbReference type="GO" id="GO:0005524">
    <property type="term" value="F:ATP binding"/>
    <property type="evidence" value="ECO:0007669"/>
    <property type="project" value="UniProtKB-KW"/>
</dbReference>
<dbReference type="GO" id="GO:0050567">
    <property type="term" value="F:glutaminyl-tRNA synthase (glutamine-hydrolyzing) activity"/>
    <property type="evidence" value="ECO:0007669"/>
    <property type="project" value="UniProtKB-UniRule"/>
</dbReference>
<dbReference type="GO" id="GO:0070681">
    <property type="term" value="P:glutaminyl-tRNAGln biosynthesis via transamidation"/>
    <property type="evidence" value="ECO:0007669"/>
    <property type="project" value="TreeGrafter"/>
</dbReference>
<dbReference type="GO" id="GO:0006450">
    <property type="term" value="P:regulation of translational fidelity"/>
    <property type="evidence" value="ECO:0007669"/>
    <property type="project" value="InterPro"/>
</dbReference>
<dbReference type="GO" id="GO:0006412">
    <property type="term" value="P:translation"/>
    <property type="evidence" value="ECO:0007669"/>
    <property type="project" value="UniProtKB-UniRule"/>
</dbReference>
<dbReference type="Gene3D" id="1.10.20.60">
    <property type="entry name" value="Glu-tRNAGln amidotransferase C subunit, N-terminal domain"/>
    <property type="match status" value="1"/>
</dbReference>
<dbReference type="HAMAP" id="MF_00122">
    <property type="entry name" value="GatC"/>
    <property type="match status" value="1"/>
</dbReference>
<dbReference type="InterPro" id="IPR036113">
    <property type="entry name" value="Asp/Glu-ADT_sf_sub_c"/>
</dbReference>
<dbReference type="InterPro" id="IPR003837">
    <property type="entry name" value="GatC"/>
</dbReference>
<dbReference type="NCBIfam" id="TIGR00135">
    <property type="entry name" value="gatC"/>
    <property type="match status" value="1"/>
</dbReference>
<dbReference type="PANTHER" id="PTHR15004">
    <property type="entry name" value="GLUTAMYL-TRNA(GLN) AMIDOTRANSFERASE SUBUNIT C, MITOCHONDRIAL"/>
    <property type="match status" value="1"/>
</dbReference>
<dbReference type="PANTHER" id="PTHR15004:SF0">
    <property type="entry name" value="GLUTAMYL-TRNA(GLN) AMIDOTRANSFERASE SUBUNIT C, MITOCHONDRIAL"/>
    <property type="match status" value="1"/>
</dbReference>
<dbReference type="Pfam" id="PF02686">
    <property type="entry name" value="GatC"/>
    <property type="match status" value="1"/>
</dbReference>
<dbReference type="SUPFAM" id="SSF141000">
    <property type="entry name" value="Glu-tRNAGln amidotransferase C subunit"/>
    <property type="match status" value="1"/>
</dbReference>
<comment type="function">
    <text evidence="1">Allows the formation of correctly charged Asn-tRNA(Asn) or Gln-tRNA(Gln) through the transamidation of misacylated Asp-tRNA(Asn) or Glu-tRNA(Gln) in organisms which lack either or both of asparaginyl-tRNA or glutaminyl-tRNA synthetases. The reaction takes place in the presence of glutamine and ATP through an activated phospho-Asp-tRNA(Asn) or phospho-Glu-tRNA(Gln).</text>
</comment>
<comment type="catalytic activity">
    <reaction evidence="1">
        <text>L-glutamyl-tRNA(Gln) + L-glutamine + ATP + H2O = L-glutaminyl-tRNA(Gln) + L-glutamate + ADP + phosphate + H(+)</text>
        <dbReference type="Rhea" id="RHEA:17521"/>
        <dbReference type="Rhea" id="RHEA-COMP:9681"/>
        <dbReference type="Rhea" id="RHEA-COMP:9684"/>
        <dbReference type="ChEBI" id="CHEBI:15377"/>
        <dbReference type="ChEBI" id="CHEBI:15378"/>
        <dbReference type="ChEBI" id="CHEBI:29985"/>
        <dbReference type="ChEBI" id="CHEBI:30616"/>
        <dbReference type="ChEBI" id="CHEBI:43474"/>
        <dbReference type="ChEBI" id="CHEBI:58359"/>
        <dbReference type="ChEBI" id="CHEBI:78520"/>
        <dbReference type="ChEBI" id="CHEBI:78521"/>
        <dbReference type="ChEBI" id="CHEBI:456216"/>
    </reaction>
</comment>
<comment type="catalytic activity">
    <reaction evidence="1">
        <text>L-aspartyl-tRNA(Asn) + L-glutamine + ATP + H2O = L-asparaginyl-tRNA(Asn) + L-glutamate + ADP + phosphate + 2 H(+)</text>
        <dbReference type="Rhea" id="RHEA:14513"/>
        <dbReference type="Rhea" id="RHEA-COMP:9674"/>
        <dbReference type="Rhea" id="RHEA-COMP:9677"/>
        <dbReference type="ChEBI" id="CHEBI:15377"/>
        <dbReference type="ChEBI" id="CHEBI:15378"/>
        <dbReference type="ChEBI" id="CHEBI:29985"/>
        <dbReference type="ChEBI" id="CHEBI:30616"/>
        <dbReference type="ChEBI" id="CHEBI:43474"/>
        <dbReference type="ChEBI" id="CHEBI:58359"/>
        <dbReference type="ChEBI" id="CHEBI:78515"/>
        <dbReference type="ChEBI" id="CHEBI:78516"/>
        <dbReference type="ChEBI" id="CHEBI:456216"/>
    </reaction>
</comment>
<comment type="subunit">
    <text evidence="1">Heterotrimer of A, B and C subunits.</text>
</comment>
<comment type="similarity">
    <text evidence="1">Belongs to the GatC family.</text>
</comment>
<evidence type="ECO:0000255" key="1">
    <source>
        <dbReference type="HAMAP-Rule" id="MF_00122"/>
    </source>
</evidence>
<sequence>MKITQEEVTHVANLSKLRFSEEETAAFATTLSKIVDMVELLGEVDTTGVAPTTTMADRKTVLRPDVAEEGTDRDRLFKNVPEQDNYYIKVPAILDDGGDA</sequence>
<reference key="1">
    <citation type="journal article" date="2007" name="J. Bacteriol.">
        <title>Genome sequence of Avery's virulent serotype 2 strain D39 of Streptococcus pneumoniae and comparison with that of unencapsulated laboratory strain R6.</title>
        <authorList>
            <person name="Lanie J.A."/>
            <person name="Ng W.-L."/>
            <person name="Kazmierczak K.M."/>
            <person name="Andrzejewski T.M."/>
            <person name="Davidsen T.M."/>
            <person name="Wayne K.J."/>
            <person name="Tettelin H."/>
            <person name="Glass J.I."/>
            <person name="Winkler M.E."/>
        </authorList>
    </citation>
    <scope>NUCLEOTIDE SEQUENCE [LARGE SCALE GENOMIC DNA]</scope>
    <source>
        <strain>D39 / NCTC 7466</strain>
    </source>
</reference>
<protein>
    <recommendedName>
        <fullName evidence="1">Aspartyl/glutamyl-tRNA(Asn/Gln) amidotransferase subunit C</fullName>
        <shortName evidence="1">Asp/Glu-ADT subunit C</shortName>
        <ecNumber evidence="1">6.3.5.-</ecNumber>
    </recommendedName>
</protein>
<name>GATC_STRP2</name>
<accession>Q04M40</accession>
<gene>
    <name evidence="1" type="primary">gatC</name>
    <name type="ordered locus">SPD_0398</name>
</gene>
<feature type="chain" id="PRO_1000016221" description="Aspartyl/glutamyl-tRNA(Asn/Gln) amidotransferase subunit C">
    <location>
        <begin position="1"/>
        <end position="100"/>
    </location>
</feature>
<organism>
    <name type="scientific">Streptococcus pneumoniae serotype 2 (strain D39 / NCTC 7466)</name>
    <dbReference type="NCBI Taxonomy" id="373153"/>
    <lineage>
        <taxon>Bacteria</taxon>
        <taxon>Bacillati</taxon>
        <taxon>Bacillota</taxon>
        <taxon>Bacilli</taxon>
        <taxon>Lactobacillales</taxon>
        <taxon>Streptococcaceae</taxon>
        <taxon>Streptococcus</taxon>
    </lineage>
</organism>